<accession>P56065</accession>
<keyword id="KW-0002">3D-structure</keyword>
<keyword id="KW-0068">Autocatalytic cleavage</keyword>
<keyword id="KW-0963">Cytoplasm</keyword>
<keyword id="KW-0210">Decarboxylase</keyword>
<keyword id="KW-0456">Lyase</keyword>
<keyword id="KW-0566">Pantothenate biosynthesis</keyword>
<keyword id="KW-0670">Pyruvate</keyword>
<keyword id="KW-1185">Reference proteome</keyword>
<keyword id="KW-0704">Schiff base</keyword>
<keyword id="KW-0865">Zymogen</keyword>
<reference key="1">
    <citation type="journal article" date="1997" name="Nature">
        <title>The complete genome sequence of the gastric pathogen Helicobacter pylori.</title>
        <authorList>
            <person name="Tomb J.-F."/>
            <person name="White O."/>
            <person name="Kerlavage A.R."/>
            <person name="Clayton R.A."/>
            <person name="Sutton G.G."/>
            <person name="Fleischmann R.D."/>
            <person name="Ketchum K.A."/>
            <person name="Klenk H.-P."/>
            <person name="Gill S.R."/>
            <person name="Dougherty B.A."/>
            <person name="Nelson K.E."/>
            <person name="Quackenbush J."/>
            <person name="Zhou L."/>
            <person name="Kirkness E.F."/>
            <person name="Peterson S.N."/>
            <person name="Loftus B.J."/>
            <person name="Richardson D.L."/>
            <person name="Dodson R.J."/>
            <person name="Khalak H.G."/>
            <person name="Glodek A."/>
            <person name="McKenney K."/>
            <person name="FitzGerald L.M."/>
            <person name="Lee N."/>
            <person name="Adams M.D."/>
            <person name="Hickey E.K."/>
            <person name="Berg D.E."/>
            <person name="Gocayne J.D."/>
            <person name="Utterback T.R."/>
            <person name="Peterson J.D."/>
            <person name="Kelley J.M."/>
            <person name="Cotton M.D."/>
            <person name="Weidman J.F."/>
            <person name="Fujii C."/>
            <person name="Bowman C."/>
            <person name="Watthey L."/>
            <person name="Wallin E."/>
            <person name="Hayes W.S."/>
            <person name="Borodovsky M."/>
            <person name="Karp P.D."/>
            <person name="Smith H.O."/>
            <person name="Fraser C.M."/>
            <person name="Venter J.C."/>
        </authorList>
    </citation>
    <scope>NUCLEOTIDE SEQUENCE [LARGE SCALE GENOMIC DNA]</scope>
    <source>
        <strain>ATCC 700392 / 26695</strain>
    </source>
</reference>
<reference key="2">
    <citation type="journal article" date="2004" name="J. Mol. Biol.">
        <title>Crystal structure of the Schiff base intermediate prior to decarboxylation in the catalytic cycle of aspartate alpha-decarboxylase.</title>
        <authorList>
            <person name="Lee B.I."/>
            <person name="Suh S.W."/>
        </authorList>
    </citation>
    <scope>X-RAY CRYSTALLOGRAPHY (1.55 ANGSTROMS) IN COMPLEX WITH SUBSTRATE ANALOG</scope>
    <scope>PROTEOLYTIC PROCESSING BY SELF</scope>
    <scope>PYRUVATE FORMATION AT SER-25</scope>
    <scope>SUBUNIT</scope>
</reference>
<feature type="chain" id="PRO_0000023091" description="Aspartate 1-decarboxylase beta chain" evidence="1">
    <location>
        <begin position="1"/>
        <end position="24"/>
    </location>
</feature>
<feature type="chain" id="PRO_0000023092" description="Aspartate 1-decarboxylase alpha chain" evidence="1">
    <location>
        <begin position="25"/>
        <end position="117"/>
    </location>
</feature>
<feature type="active site" description="Schiff-base intermediate with substrate; via pyruvic acid" evidence="2">
    <location>
        <position position="25"/>
    </location>
</feature>
<feature type="active site" description="Proton donor">
    <location>
        <position position="58"/>
    </location>
</feature>
<feature type="binding site">
    <location>
        <position position="57"/>
    </location>
    <ligand>
        <name>substrate</name>
    </ligand>
</feature>
<feature type="binding site">
    <location>
        <begin position="72"/>
        <end position="74"/>
    </location>
    <ligand>
        <name>substrate</name>
    </ligand>
</feature>
<feature type="modified residue" description="Pyruvic acid (Ser)" evidence="2">
    <location>
        <position position="25"/>
    </location>
</feature>
<feature type="strand" evidence="3">
    <location>
        <begin position="3"/>
        <end position="14"/>
    </location>
</feature>
<feature type="strand" evidence="3">
    <location>
        <begin position="17"/>
        <end position="19"/>
    </location>
</feature>
<feature type="strand" evidence="3">
    <location>
        <begin position="27"/>
        <end position="29"/>
    </location>
</feature>
<feature type="helix" evidence="3">
    <location>
        <begin position="30"/>
        <end position="35"/>
    </location>
</feature>
<feature type="strand" evidence="3">
    <location>
        <begin position="43"/>
        <end position="48"/>
    </location>
</feature>
<feature type="turn" evidence="3">
    <location>
        <begin position="49"/>
        <end position="51"/>
    </location>
</feature>
<feature type="strand" evidence="3">
    <location>
        <begin position="54"/>
        <end position="58"/>
    </location>
</feature>
<feature type="strand" evidence="3">
    <location>
        <begin position="60"/>
        <end position="62"/>
    </location>
</feature>
<feature type="strand" evidence="3">
    <location>
        <begin position="68"/>
        <end position="71"/>
    </location>
</feature>
<feature type="helix" evidence="3">
    <location>
        <begin position="72"/>
        <end position="77"/>
    </location>
</feature>
<feature type="strand" evidence="3">
    <location>
        <begin position="83"/>
        <end position="92"/>
    </location>
</feature>
<feature type="helix" evidence="3">
    <location>
        <begin position="94"/>
        <end position="99"/>
    </location>
</feature>
<feature type="strand" evidence="3">
    <location>
        <begin position="103"/>
        <end position="107"/>
    </location>
</feature>
<feature type="strand" evidence="3">
    <location>
        <begin position="113"/>
        <end position="117"/>
    </location>
</feature>
<comment type="function">
    <text evidence="1">Catalyzes the pyruvoyl-dependent decarboxylation of aspartate to produce beta-alanine.</text>
</comment>
<comment type="catalytic activity">
    <reaction evidence="1">
        <text>L-aspartate + H(+) = beta-alanine + CO2</text>
        <dbReference type="Rhea" id="RHEA:19497"/>
        <dbReference type="ChEBI" id="CHEBI:15378"/>
        <dbReference type="ChEBI" id="CHEBI:16526"/>
        <dbReference type="ChEBI" id="CHEBI:29991"/>
        <dbReference type="ChEBI" id="CHEBI:57966"/>
        <dbReference type="EC" id="4.1.1.11"/>
    </reaction>
</comment>
<comment type="cofactor">
    <cofactor>
        <name>pyruvate</name>
        <dbReference type="ChEBI" id="CHEBI:15361"/>
    </cofactor>
    <text>Binds 1 pyruvoyl group covalently per subunit.</text>
</comment>
<comment type="pathway">
    <text evidence="1">Cofactor biosynthesis; (R)-pantothenate biosynthesis; beta-alanine from L-aspartate: step 1/1.</text>
</comment>
<comment type="subunit">
    <text evidence="1 2">Heterooctamer of four alpha and four beta subunits.</text>
</comment>
<comment type="subcellular location">
    <subcellularLocation>
        <location evidence="1">Cytoplasm</location>
    </subcellularLocation>
</comment>
<comment type="PTM">
    <text>Is synthesized initially as an inactive proenzyme, which is activated by self-cleavage at a specific serine bond to produce a beta-subunit with a hydroxyl group at its C-terminus and an alpha-subunit with a pyruvoyl group at its N-terminus.</text>
</comment>
<comment type="similarity">
    <text evidence="1">Belongs to the PanD family.</text>
</comment>
<gene>
    <name evidence="1" type="primary">panD</name>
    <name type="ordered locus">HP_0034</name>
</gene>
<sequence>MTFEMLYSKIHRATITDANLNYIGSITIDEDLAKLAKLREGMKVEIVDVNNGERFSTYVILGKKRGEICVNGAAARKVAIGDVVIILAYASMNEDEINAHKPSIVLVDEKNEILEKG</sequence>
<proteinExistence type="evidence at protein level"/>
<dbReference type="EC" id="4.1.1.11" evidence="1"/>
<dbReference type="EMBL" id="AE000511">
    <property type="protein sequence ID" value="AAD07103.1"/>
    <property type="molecule type" value="Genomic_DNA"/>
</dbReference>
<dbReference type="PIR" id="B64524">
    <property type="entry name" value="B64524"/>
</dbReference>
<dbReference type="RefSeq" id="NP_206836.1">
    <property type="nucleotide sequence ID" value="NC_000915.1"/>
</dbReference>
<dbReference type="RefSeq" id="WP_000142250.1">
    <property type="nucleotide sequence ID" value="NC_018939.1"/>
</dbReference>
<dbReference type="PDB" id="1UHD">
    <property type="method" value="X-ray"/>
    <property type="resolution" value="2.00 A"/>
    <property type="chains" value="A=26-117, B=1-24"/>
</dbReference>
<dbReference type="PDB" id="1UHE">
    <property type="method" value="X-ray"/>
    <property type="resolution" value="1.55 A"/>
    <property type="chains" value="A=26-117, B=1-24"/>
</dbReference>
<dbReference type="PDBsum" id="1UHD"/>
<dbReference type="PDBsum" id="1UHE"/>
<dbReference type="SMR" id="P56065"/>
<dbReference type="FunCoup" id="P56065">
    <property type="interactions" value="239"/>
</dbReference>
<dbReference type="STRING" id="85962.HP_0034"/>
<dbReference type="PaxDb" id="85962-C694_00160"/>
<dbReference type="EnsemblBacteria" id="AAD07103">
    <property type="protein sequence ID" value="AAD07103"/>
    <property type="gene ID" value="HP_0034"/>
</dbReference>
<dbReference type="KEGG" id="heo:C694_00160"/>
<dbReference type="KEGG" id="hpy:HP_0034"/>
<dbReference type="PATRIC" id="fig|85962.47.peg.35"/>
<dbReference type="eggNOG" id="COG0853">
    <property type="taxonomic scope" value="Bacteria"/>
</dbReference>
<dbReference type="InParanoid" id="P56065"/>
<dbReference type="OrthoDB" id="9803983at2"/>
<dbReference type="PhylomeDB" id="P56065"/>
<dbReference type="BRENDA" id="4.1.1.11">
    <property type="organism ID" value="2604"/>
</dbReference>
<dbReference type="UniPathway" id="UPA00028">
    <property type="reaction ID" value="UER00002"/>
</dbReference>
<dbReference type="EvolutionaryTrace" id="P56065"/>
<dbReference type="Proteomes" id="UP000000429">
    <property type="component" value="Chromosome"/>
</dbReference>
<dbReference type="GO" id="GO:0005829">
    <property type="term" value="C:cytosol"/>
    <property type="evidence" value="ECO:0000318"/>
    <property type="project" value="GO_Central"/>
</dbReference>
<dbReference type="GO" id="GO:0004068">
    <property type="term" value="F:aspartate 1-decarboxylase activity"/>
    <property type="evidence" value="ECO:0000318"/>
    <property type="project" value="GO_Central"/>
</dbReference>
<dbReference type="GO" id="GO:0006523">
    <property type="term" value="P:alanine biosynthetic process"/>
    <property type="evidence" value="ECO:0000318"/>
    <property type="project" value="GO_Central"/>
</dbReference>
<dbReference type="GO" id="GO:0015940">
    <property type="term" value="P:pantothenate biosynthetic process"/>
    <property type="evidence" value="ECO:0000318"/>
    <property type="project" value="GO_Central"/>
</dbReference>
<dbReference type="CDD" id="cd06919">
    <property type="entry name" value="Asp_decarbox"/>
    <property type="match status" value="1"/>
</dbReference>
<dbReference type="Gene3D" id="2.40.40.20">
    <property type="match status" value="1"/>
</dbReference>
<dbReference type="HAMAP" id="MF_00446">
    <property type="entry name" value="PanD"/>
    <property type="match status" value="1"/>
</dbReference>
<dbReference type="InterPro" id="IPR009010">
    <property type="entry name" value="Asp_de-COase-like_dom_sf"/>
</dbReference>
<dbReference type="InterPro" id="IPR003190">
    <property type="entry name" value="Asp_decarbox"/>
</dbReference>
<dbReference type="NCBIfam" id="TIGR00223">
    <property type="entry name" value="panD"/>
    <property type="match status" value="1"/>
</dbReference>
<dbReference type="PANTHER" id="PTHR21012">
    <property type="entry name" value="ASPARTATE 1-DECARBOXYLASE"/>
    <property type="match status" value="1"/>
</dbReference>
<dbReference type="PANTHER" id="PTHR21012:SF0">
    <property type="entry name" value="ASPARTATE 1-DECARBOXYLASE"/>
    <property type="match status" value="1"/>
</dbReference>
<dbReference type="Pfam" id="PF02261">
    <property type="entry name" value="Asp_decarbox"/>
    <property type="match status" value="1"/>
</dbReference>
<dbReference type="PIRSF" id="PIRSF006246">
    <property type="entry name" value="Asp_decarbox"/>
    <property type="match status" value="1"/>
</dbReference>
<dbReference type="SUPFAM" id="SSF50692">
    <property type="entry name" value="ADC-like"/>
    <property type="match status" value="1"/>
</dbReference>
<organism>
    <name type="scientific">Helicobacter pylori (strain ATCC 700392 / 26695)</name>
    <name type="common">Campylobacter pylori</name>
    <dbReference type="NCBI Taxonomy" id="85962"/>
    <lineage>
        <taxon>Bacteria</taxon>
        <taxon>Pseudomonadati</taxon>
        <taxon>Campylobacterota</taxon>
        <taxon>Epsilonproteobacteria</taxon>
        <taxon>Campylobacterales</taxon>
        <taxon>Helicobacteraceae</taxon>
        <taxon>Helicobacter</taxon>
    </lineage>
</organism>
<evidence type="ECO:0000255" key="1">
    <source>
        <dbReference type="HAMAP-Rule" id="MF_00446"/>
    </source>
</evidence>
<evidence type="ECO:0000269" key="2">
    <source>
    </source>
</evidence>
<evidence type="ECO:0007829" key="3">
    <source>
        <dbReference type="PDB" id="1UHE"/>
    </source>
</evidence>
<name>PAND_HELPY</name>
<protein>
    <recommendedName>
        <fullName evidence="1">Aspartate 1-decarboxylase</fullName>
        <ecNumber evidence="1">4.1.1.11</ecNumber>
    </recommendedName>
    <alternativeName>
        <fullName evidence="1">Aspartate alpha-decarboxylase</fullName>
    </alternativeName>
    <component>
        <recommendedName>
            <fullName evidence="1">Aspartate 1-decarboxylase beta chain</fullName>
        </recommendedName>
    </component>
    <component>
        <recommendedName>
            <fullName evidence="1">Aspartate 1-decarboxylase alpha chain</fullName>
        </recommendedName>
    </component>
</protein>